<proteinExistence type="evidence at protein level"/>
<sequence>MVNLDFEVEPCLFPSLSTRSVNQSHGKAMAYQHGFEWEVTISEDSVFQGIVLSWNILLAKYTDSTTITFGVISGSEGNKCHDDTTVDEYCTSFHPESCLPTVLPLASRRQYRFHEWKYDARINTCIANGSHKVWLDHWINSPNHGIKLILVVEQGRWPCMSLYGKPSFIDEGSVRLLCTAFQHILDCVLENQMGLLKNIEVTPSHHYQRILDWNSHIPKEPLAECIHDLIQRRCMETPDAEAICAWDGTMSYAALEQESARTMEWLQHHGVGPETIVPLLFEKSKWTVVAVLGVLKAGAAFVLLETSHPIERLKSICHDIGACIILTSALCKEIGSNLADITMSVPCDVERKLPCGDGKMKPCIRAQPRNAAYVAYTSGSTGKPKGVIIEHASFCTNAMVSSEAQNLNGCSRVLQFASYAFDVSIHETLVPLMLGGCVCIPSASQRVNSLQEAIVQLRVNWMELTPSVTRLLSPHKIPNVKTLVVGGESISPAELARWAGHIRLNVAYGPAECTVVSMVQSNVTKHGDPLSIGRGCGGSVWIVEPQNHNVLVPIGAPGELLIGGPIVGRGYLNRPEQTAAVFIQNPPWQAENNSRFYKTGDVVRQNSDGSVVFLGRKDTQVKLRGQRIELGEIEYQASGFFPGAAVAVEVGKLYHGHPALVLFVEWKSLENRKRCSGTNCCRTVQNDKTHFMSNAQWAKAGLSQILPSYMVPDIIVPLCTIPLSHSAKVDRKALRAMITRWSKDEVKLYQVTANSTSCGRYPHHAGQKYDEMVRMVARVLSLDPSEVREHDNFFQLGGDSLSAIMLSREIDTIPLLSLTVADIFQSASIAELFHRSQKTPLPESMEPGIPTKVLPFSLLDPMKIDNYRERAAEHCGVSPSQIEDIYPCSPLQARLMARTSRQPGAFQGHFNFRLSLDTDWDRLHWAWNKAADFLPILRTRIINTWQLAEGNPLQVVVRDKDIEWVEVAASESEPKSRMSFGSPLIYCVAVRAKHSPVLILNIHHALFDLVVFEQILEAVKAAYQGKPLVWRPFSPFIKYVQDLNRSQANEFWKREFTGLRAVPFPADITPGRSNLDAIRWTRKSFCLGHQNQAGITLSSLIRLAWAMVLSQYTGSLDVVFGTTVMGRNMPGTADVGGPTIATYPLRITLRGEESIKEALQRIQNHGIAIAPFEQSGIQHIRHSSPESAIACSFRNMLVIQPSSDNSLLAKRDLSPLLVLEERGSWKQKSYVNFSTQALNVVCEPGAGHLDVSAYFDQSILSSQEVEEMLSCMDRLLQLVLQHPDASMGTILSQSQSPDGDLDRYEERTSLARLEQEACQYLGNGVRVAAVWIIPMASHVPKLALFVGAMSLNTVSDGRWILAGVKEPLRTRLVQMMHEFQNNPLGRAVPFCCIPVPLQYRPSMPGLFLDRARAQEAASKFTLKTLTSWQNTGDSGFEEPLLPLEATLRRALAKVLSLEPEAIGVNDDLVSLGCDSLVAMQFAAQCDRQSLRLTISEIFQATSLRCLASTLNSRPSGDPTPALEAFALLKPMYGDRESFEQDIQRSVDGWNIKESIDAFPCTTAHLGLLSGLGTCQSHTIWEIGSPEEQIDLVSFAKAWLNLVNRHAALRTLLLPSRSNPSEWLHVVLKSSPVGVKVVTKLKNASLLKIARKPLLSRDGLGGLPYRFAVYQSTTGRTLCKLEARYAFLDAFSVLVLMKELRRILDCLPTSDPLLPSYSSWVAYLRRWSEDPLHLQFWDRYLAGLKPCILRASRNHHHHQHEGRQHHGASETNGNRPRLIKSHRQIVVQDAVALRKYCDQRELTITNILQVAWALTLKEQTGIEDICFGALVSGRDVPVDHVGNIVGSLFNVLACRIQMPATDSISSVLLENQQMMRERASHQFCSLQEVTRLVLKARPEASSLFNTCLSVEQPLSDEAETGKGFRALETVEETEYDLIVAATVFPDRIQASIMYWSYFCDPARAATIAETFAQSIERIILCA</sequence>
<feature type="chain" id="PRO_0000461555" description="Nonribosomal peptide synthetase rstn8">
    <location>
        <begin position="1"/>
        <end position="1981"/>
    </location>
</feature>
<feature type="domain" description="Carrier 1" evidence="2">
    <location>
        <begin position="763"/>
        <end position="840"/>
    </location>
</feature>
<feature type="domain" description="Carrier 2" evidence="2">
    <location>
        <begin position="1438"/>
        <end position="1514"/>
    </location>
</feature>
<feature type="region of interest" description="Adenylation" evidence="1 8">
    <location>
        <begin position="251"/>
        <end position="638"/>
    </location>
</feature>
<feature type="region of interest" description="Condensation 1" evidence="1 8">
    <location>
        <begin position="883"/>
        <end position="1293"/>
    </location>
</feature>
<feature type="region of interest" description="Condensation 1" evidence="1 8">
    <location>
        <begin position="1586"/>
        <end position="1978"/>
    </location>
</feature>
<feature type="region of interest" description="Disordered" evidence="3">
    <location>
        <begin position="1754"/>
        <end position="1774"/>
    </location>
</feature>
<feature type="modified residue" description="O-(pantetheine 4'-phosphoryl)serine" evidence="2">
    <location>
        <position position="800"/>
    </location>
</feature>
<feature type="modified residue" description="O-(pantetheine 4'-phosphoryl)serine" evidence="2">
    <location>
        <position position="1475"/>
    </location>
</feature>
<reference key="1">
    <citation type="journal article" date="2018" name="ACS Chem. Biol.">
        <title>Biosynthesis and Structure-Activity Relationship Studies of Okaramines That Target Insect Glutamate-Gated Chloride Channels.</title>
        <authorList>
            <person name="Kato N."/>
            <person name="Furutani S."/>
            <person name="Otaka J."/>
            <person name="Noguchi A."/>
            <person name="Kinugasa K."/>
            <person name="Kai K."/>
            <person name="Hayashi H."/>
            <person name="Ihara M."/>
            <person name="Takahashi S."/>
            <person name="Matsuda K."/>
            <person name="Osada H."/>
        </authorList>
    </citation>
    <scope>NUCLEOTIDE SEQUENCE [GENOMIC DNA]</scope>
    <scope>FUNCTION</scope>
    <scope>PATHWAY</scope>
    <source>
        <strain>ATCC 90288 / AK-40</strain>
    </source>
</reference>
<reference key="2">
    <citation type="journal article" date="2017" name="Angew. Chem. Int. Ed.">
        <title>Biosynthesis of Complex Indole Alkaloids: Elucidation of the Concise Pathway of Okaramines.</title>
        <authorList>
            <person name="Lai C.Y."/>
            <person name="Lo I.W."/>
            <person name="Hewage R.T."/>
            <person name="Chen Y.C."/>
            <person name="Chen C.T."/>
            <person name="Lee C.F."/>
            <person name="Lin S."/>
            <person name="Tang M.C."/>
            <person name="Lin H.C."/>
        </authorList>
    </citation>
    <scope>FUNCTION</scope>
    <scope>DISRUPTION PHENOTYPE</scope>
    <scope>CATALYTIC ACTIVITY</scope>
    <scope>PATHWAY</scope>
</reference>
<gene>
    <name evidence="6" type="primary">okaA</name>
</gene>
<name>OKAA_PENOH</name>
<comment type="function">
    <text evidence="4 5">Nonribosomal peptide synthetase; part of the gene cluster that mediates the biosynthesis of okaramine B, a prenylated indole alkaloid that possesses an unusual octacyclic ring system, including a four-membered azetidine ring and an eight-membered azocine ring, and that exhibits insecticidal activity against silkworm larvae (PubMed:28631282, PubMed:29384650). Within the pathway, okaA acts as a bimodular non-ribosomal peptide synthetase (NRPS) that condenses two tryptophan molecules into cyclo(L-Trp-L-Trp) (PubMed:28631282). Prenylation by the prenyltransferase okaC then leads to the formation of cyclo(N8-(alpha,alpha-dimethylallyl)-L-Trp-6a-(alpha,alpha-dime-thylallyl)-L-Trp). This is followed by indole 2,3-epoxidation by the FAD-dependent monooxygenase okaB to facilitate the formation of the hexahydropyrrolo[2,3-b]indole (HPI) moiety of okaramine C. The cytochrome P450 monooxygenase okaD then likely catalyzes formation of the eight-membered ring of okaramine A. The dioxygenase okaE further forms the unusual 2-dimethyl-3-methyl-azetidine ring to yield 12-deshydroxyl okaramine E, as well as the hydroxylation of 12-deshydroxyl okaramine E to produce okaramine E. The cytochrome P450 monoxygenase okaG converts 12-deshydroxyl okaramine E into 3-desmethyl okaramine B which is further methylated by the methyltransferase okaF into okaramine B. In a shunt pathway, okaG and okaF together are also able to convert okaramine E into okaramine D (PubMed:28631282, PubMed:29384650). Okaramine H is produced by nonenzymatic conversion from okaramine A (PubMed:29384650).</text>
</comment>
<comment type="catalytic activity">
    <reaction evidence="4">
        <text>2 L-tryptophan = cyclo(L-Trp-L-Trp) + 2 H2O</text>
        <dbReference type="Rhea" id="RHEA:80527"/>
        <dbReference type="ChEBI" id="CHEBI:15377"/>
        <dbReference type="ChEBI" id="CHEBI:57912"/>
        <dbReference type="ChEBI" id="CHEBI:232460"/>
    </reaction>
    <physiologicalReaction direction="left-to-right" evidence="4">
        <dbReference type="Rhea" id="RHEA:80528"/>
    </physiologicalReaction>
</comment>
<comment type="cofactor">
    <cofactor evidence="2">
        <name>pantetheine 4'-phosphate</name>
        <dbReference type="ChEBI" id="CHEBI:47942"/>
    </cofactor>
</comment>
<comment type="pathway">
    <text evidence="4 9">Alkaloid biosynthesis.</text>
</comment>
<comment type="domain">
    <text evidence="8">NRP synthetases are composed of discrete domains (adenylation (A), thiolation (T) or peptidyl carrier protein (PCP) and condensation (C) domains) which when grouped together are referred to as a single module. Each module is responsible for the recognition (via the A domain) and incorporation of a single amino acid into the growing peptide product. Thus, an NRP synthetase is generally composed of one or more modules and can terminate in a thioesterase domain (TE) that releases the newly synthesized peptide from the enzym. Occasionally, methyltransferase domains (responsible for amino acid methylation) are present within the NRP synthetase. OkaA has the following bimodular architecture: A-T-C-T-C.</text>
</comment>
<comment type="disruption phenotype">
    <text evidence="4">Leads to the complete abolishment of all okaramine products and no accumulation of any intermediates.</text>
</comment>
<comment type="similarity">
    <text evidence="7">Belongs to the NRP synthetase family.</text>
</comment>
<protein>
    <recommendedName>
        <fullName evidence="6">Nonribosomal peptide synthetase rstn8</fullName>
        <ecNumber evidence="4">6.3.2.-</ecNumber>
    </recommendedName>
    <alternativeName>
        <fullName evidence="6">Cyclo(L-Trp-L-Trp) synthase okaA</fullName>
    </alternativeName>
    <alternativeName>
        <fullName evidence="6">Okaramines biosynthesis cluster protein A</fullName>
    </alternativeName>
</protein>
<accession>A0A2Z5UHX0</accession>
<keyword id="KW-0436">Ligase</keyword>
<keyword id="KW-0596">Phosphopantetheine</keyword>
<keyword id="KW-0597">Phosphoprotein</keyword>
<keyword id="KW-0677">Repeat</keyword>
<evidence type="ECO:0000255" key="1"/>
<evidence type="ECO:0000255" key="2">
    <source>
        <dbReference type="PROSITE-ProRule" id="PRU00258"/>
    </source>
</evidence>
<evidence type="ECO:0000256" key="3">
    <source>
        <dbReference type="SAM" id="MobiDB-lite"/>
    </source>
</evidence>
<evidence type="ECO:0000269" key="4">
    <source>
    </source>
</evidence>
<evidence type="ECO:0000269" key="5">
    <source>
    </source>
</evidence>
<evidence type="ECO:0000303" key="6">
    <source>
    </source>
</evidence>
<evidence type="ECO:0000305" key="7"/>
<evidence type="ECO:0000305" key="8">
    <source>
    </source>
</evidence>
<evidence type="ECO:0000305" key="9">
    <source>
    </source>
</evidence>
<organism>
    <name type="scientific">Penicillium ochrochloron</name>
    <dbReference type="NCBI Taxonomy" id="69780"/>
    <lineage>
        <taxon>Eukaryota</taxon>
        <taxon>Fungi</taxon>
        <taxon>Dikarya</taxon>
        <taxon>Ascomycota</taxon>
        <taxon>Pezizomycotina</taxon>
        <taxon>Eurotiomycetes</taxon>
        <taxon>Eurotiomycetidae</taxon>
        <taxon>Eurotiales</taxon>
        <taxon>Aspergillaceae</taxon>
        <taxon>Penicillium</taxon>
    </lineage>
</organism>
<dbReference type="EC" id="6.3.2.-" evidence="4"/>
<dbReference type="EMBL" id="LC316945">
    <property type="protein sequence ID" value="BBB04327.1"/>
    <property type="molecule type" value="Genomic_DNA"/>
</dbReference>
<dbReference type="GO" id="GO:0005737">
    <property type="term" value="C:cytoplasm"/>
    <property type="evidence" value="ECO:0007669"/>
    <property type="project" value="TreeGrafter"/>
</dbReference>
<dbReference type="GO" id="GO:0016874">
    <property type="term" value="F:ligase activity"/>
    <property type="evidence" value="ECO:0007669"/>
    <property type="project" value="UniProtKB-KW"/>
</dbReference>
<dbReference type="GO" id="GO:0031177">
    <property type="term" value="F:phosphopantetheine binding"/>
    <property type="evidence" value="ECO:0007669"/>
    <property type="project" value="InterPro"/>
</dbReference>
<dbReference type="GO" id="GO:0043041">
    <property type="term" value="P:amino acid activation for nonribosomal peptide biosynthetic process"/>
    <property type="evidence" value="ECO:0007669"/>
    <property type="project" value="TreeGrafter"/>
</dbReference>
<dbReference type="GO" id="GO:0044550">
    <property type="term" value="P:secondary metabolite biosynthetic process"/>
    <property type="evidence" value="ECO:0007669"/>
    <property type="project" value="TreeGrafter"/>
</dbReference>
<dbReference type="CDD" id="cd05918">
    <property type="entry name" value="A_NRPS_SidN3_like"/>
    <property type="match status" value="1"/>
</dbReference>
<dbReference type="CDD" id="cd19545">
    <property type="entry name" value="FUM14_C_NRPS-like"/>
    <property type="match status" value="1"/>
</dbReference>
<dbReference type="FunFam" id="3.30.300.30:FF:000015">
    <property type="entry name" value="Nonribosomal peptide synthase SidD"/>
    <property type="match status" value="1"/>
</dbReference>
<dbReference type="FunFam" id="3.40.50.12780:FF:000014">
    <property type="entry name" value="Nonribosomal peptide synthetase 1"/>
    <property type="match status" value="1"/>
</dbReference>
<dbReference type="Gene3D" id="3.30.300.30">
    <property type="match status" value="1"/>
</dbReference>
<dbReference type="Gene3D" id="1.10.1200.10">
    <property type="entry name" value="ACP-like"/>
    <property type="match status" value="2"/>
</dbReference>
<dbReference type="Gene3D" id="3.30.559.10">
    <property type="entry name" value="Chloramphenicol acetyltransferase-like domain"/>
    <property type="match status" value="2"/>
</dbReference>
<dbReference type="Gene3D" id="3.40.50.12780">
    <property type="entry name" value="N-terminal domain of ligase-like"/>
    <property type="match status" value="1"/>
</dbReference>
<dbReference type="Gene3D" id="3.30.559.30">
    <property type="entry name" value="Nonribosomal peptide synthetase, condensation domain"/>
    <property type="match status" value="2"/>
</dbReference>
<dbReference type="InterPro" id="IPR010071">
    <property type="entry name" value="AA_adenyl_dom"/>
</dbReference>
<dbReference type="InterPro" id="IPR036736">
    <property type="entry name" value="ACP-like_sf"/>
</dbReference>
<dbReference type="InterPro" id="IPR045851">
    <property type="entry name" value="AMP-bd_C_sf"/>
</dbReference>
<dbReference type="InterPro" id="IPR020845">
    <property type="entry name" value="AMP-binding_CS"/>
</dbReference>
<dbReference type="InterPro" id="IPR000873">
    <property type="entry name" value="AMP-dep_synth/lig_dom"/>
</dbReference>
<dbReference type="InterPro" id="IPR042099">
    <property type="entry name" value="ANL_N_sf"/>
</dbReference>
<dbReference type="InterPro" id="IPR023213">
    <property type="entry name" value="CAT-like_dom_sf"/>
</dbReference>
<dbReference type="InterPro" id="IPR001242">
    <property type="entry name" value="Condensatn"/>
</dbReference>
<dbReference type="InterPro" id="IPR020806">
    <property type="entry name" value="PKS_PP-bd"/>
</dbReference>
<dbReference type="InterPro" id="IPR009081">
    <property type="entry name" value="PP-bd_ACP"/>
</dbReference>
<dbReference type="InterPro" id="IPR006162">
    <property type="entry name" value="Ppantetheine_attach_site"/>
</dbReference>
<dbReference type="NCBIfam" id="TIGR01733">
    <property type="entry name" value="AA-adenyl-dom"/>
    <property type="match status" value="1"/>
</dbReference>
<dbReference type="PANTHER" id="PTHR45527:SF16">
    <property type="entry name" value="NONRIBOSOMAL PEPTIDE SYNTHASE ATNA-RELATED"/>
    <property type="match status" value="1"/>
</dbReference>
<dbReference type="PANTHER" id="PTHR45527">
    <property type="entry name" value="NONRIBOSOMAL PEPTIDE SYNTHETASE"/>
    <property type="match status" value="1"/>
</dbReference>
<dbReference type="Pfam" id="PF00501">
    <property type="entry name" value="AMP-binding"/>
    <property type="match status" value="1"/>
</dbReference>
<dbReference type="Pfam" id="PF00668">
    <property type="entry name" value="Condensation"/>
    <property type="match status" value="2"/>
</dbReference>
<dbReference type="Pfam" id="PF00550">
    <property type="entry name" value="PP-binding"/>
    <property type="match status" value="2"/>
</dbReference>
<dbReference type="SMART" id="SM00823">
    <property type="entry name" value="PKS_PP"/>
    <property type="match status" value="2"/>
</dbReference>
<dbReference type="SUPFAM" id="SSF56801">
    <property type="entry name" value="Acetyl-CoA synthetase-like"/>
    <property type="match status" value="1"/>
</dbReference>
<dbReference type="SUPFAM" id="SSF47336">
    <property type="entry name" value="ACP-like"/>
    <property type="match status" value="2"/>
</dbReference>
<dbReference type="SUPFAM" id="SSF52777">
    <property type="entry name" value="CoA-dependent acyltransferases"/>
    <property type="match status" value="4"/>
</dbReference>
<dbReference type="PROSITE" id="PS00455">
    <property type="entry name" value="AMP_BINDING"/>
    <property type="match status" value="1"/>
</dbReference>
<dbReference type="PROSITE" id="PS50075">
    <property type="entry name" value="CARRIER"/>
    <property type="match status" value="2"/>
</dbReference>
<dbReference type="PROSITE" id="PS00012">
    <property type="entry name" value="PHOSPHOPANTETHEINE"/>
    <property type="match status" value="1"/>
</dbReference>